<gene>
    <name evidence="1" type="primary">mdh</name>
    <name type="ordered locus">RC1_4080</name>
</gene>
<name>MDH_RHOCS</name>
<accession>B6IYP5</accession>
<organism>
    <name type="scientific">Rhodospirillum centenum (strain ATCC 51521 / SW)</name>
    <dbReference type="NCBI Taxonomy" id="414684"/>
    <lineage>
        <taxon>Bacteria</taxon>
        <taxon>Pseudomonadati</taxon>
        <taxon>Pseudomonadota</taxon>
        <taxon>Alphaproteobacteria</taxon>
        <taxon>Rhodospirillales</taxon>
        <taxon>Rhodospirillaceae</taxon>
        <taxon>Rhodospirillum</taxon>
    </lineage>
</organism>
<comment type="function">
    <text evidence="1">Catalyzes the reversible oxidation of malate to oxaloacetate.</text>
</comment>
<comment type="catalytic activity">
    <reaction evidence="1">
        <text>(S)-malate + NAD(+) = oxaloacetate + NADH + H(+)</text>
        <dbReference type="Rhea" id="RHEA:21432"/>
        <dbReference type="ChEBI" id="CHEBI:15378"/>
        <dbReference type="ChEBI" id="CHEBI:15589"/>
        <dbReference type="ChEBI" id="CHEBI:16452"/>
        <dbReference type="ChEBI" id="CHEBI:57540"/>
        <dbReference type="ChEBI" id="CHEBI:57945"/>
        <dbReference type="EC" id="1.1.1.37"/>
    </reaction>
</comment>
<comment type="similarity">
    <text evidence="1">Belongs to the LDH/MDH superfamily. MDH type 3 family.</text>
</comment>
<reference key="1">
    <citation type="submission" date="2007-03" db="EMBL/GenBank/DDBJ databases">
        <title>Genome sequence of Rhodospirillum centenum.</title>
        <authorList>
            <person name="Touchman J.W."/>
            <person name="Bauer C."/>
            <person name="Blankenship R.E."/>
        </authorList>
    </citation>
    <scope>NUCLEOTIDE SEQUENCE [LARGE SCALE GENOMIC DNA]</scope>
    <source>
        <strain>ATCC 51521 / SW</strain>
    </source>
</reference>
<dbReference type="EC" id="1.1.1.37" evidence="1"/>
<dbReference type="EMBL" id="CP000613">
    <property type="protein sequence ID" value="ACJ01419.1"/>
    <property type="molecule type" value="Genomic_DNA"/>
</dbReference>
<dbReference type="RefSeq" id="WP_012569192.1">
    <property type="nucleotide sequence ID" value="NC_011420.2"/>
</dbReference>
<dbReference type="SMR" id="B6IYP5"/>
<dbReference type="STRING" id="414684.RC1_4080"/>
<dbReference type="KEGG" id="rce:RC1_4080"/>
<dbReference type="eggNOG" id="COG0039">
    <property type="taxonomic scope" value="Bacteria"/>
</dbReference>
<dbReference type="HOGENOM" id="CLU_045401_2_1_5"/>
<dbReference type="OrthoDB" id="9802969at2"/>
<dbReference type="Proteomes" id="UP000001591">
    <property type="component" value="Chromosome"/>
</dbReference>
<dbReference type="GO" id="GO:0005737">
    <property type="term" value="C:cytoplasm"/>
    <property type="evidence" value="ECO:0007669"/>
    <property type="project" value="TreeGrafter"/>
</dbReference>
<dbReference type="GO" id="GO:0030060">
    <property type="term" value="F:L-malate dehydrogenase (NAD+) activity"/>
    <property type="evidence" value="ECO:0007669"/>
    <property type="project" value="UniProtKB-UniRule"/>
</dbReference>
<dbReference type="GO" id="GO:0019752">
    <property type="term" value="P:carboxylic acid metabolic process"/>
    <property type="evidence" value="ECO:0007669"/>
    <property type="project" value="InterPro"/>
</dbReference>
<dbReference type="GO" id="GO:0006099">
    <property type="term" value="P:tricarboxylic acid cycle"/>
    <property type="evidence" value="ECO:0007669"/>
    <property type="project" value="UniProtKB-UniRule"/>
</dbReference>
<dbReference type="CDD" id="cd01339">
    <property type="entry name" value="LDH-like_MDH"/>
    <property type="match status" value="1"/>
</dbReference>
<dbReference type="FunFam" id="3.40.50.720:FF:000018">
    <property type="entry name" value="Malate dehydrogenase"/>
    <property type="match status" value="1"/>
</dbReference>
<dbReference type="FunFam" id="3.90.110.10:FF:000004">
    <property type="entry name" value="Malate dehydrogenase"/>
    <property type="match status" value="1"/>
</dbReference>
<dbReference type="Gene3D" id="3.90.110.10">
    <property type="entry name" value="Lactate dehydrogenase/glycoside hydrolase, family 4, C-terminal"/>
    <property type="match status" value="1"/>
</dbReference>
<dbReference type="Gene3D" id="3.40.50.720">
    <property type="entry name" value="NAD(P)-binding Rossmann-like Domain"/>
    <property type="match status" value="1"/>
</dbReference>
<dbReference type="HAMAP" id="MF_00487">
    <property type="entry name" value="Malate_dehydrog_3"/>
    <property type="match status" value="1"/>
</dbReference>
<dbReference type="InterPro" id="IPR001557">
    <property type="entry name" value="L-lactate/malate_DH"/>
</dbReference>
<dbReference type="InterPro" id="IPR022383">
    <property type="entry name" value="Lactate/malate_DH_C"/>
</dbReference>
<dbReference type="InterPro" id="IPR001236">
    <property type="entry name" value="Lactate/malate_DH_N"/>
</dbReference>
<dbReference type="InterPro" id="IPR015955">
    <property type="entry name" value="Lactate_DH/Glyco_Ohase_4_C"/>
</dbReference>
<dbReference type="InterPro" id="IPR011275">
    <property type="entry name" value="Malate_DH_type3"/>
</dbReference>
<dbReference type="InterPro" id="IPR036291">
    <property type="entry name" value="NAD(P)-bd_dom_sf"/>
</dbReference>
<dbReference type="NCBIfam" id="TIGR01763">
    <property type="entry name" value="MalateDH_bact"/>
    <property type="match status" value="1"/>
</dbReference>
<dbReference type="NCBIfam" id="NF004863">
    <property type="entry name" value="PRK06223.1"/>
    <property type="match status" value="1"/>
</dbReference>
<dbReference type="PANTHER" id="PTHR11540">
    <property type="entry name" value="MALATE AND LACTATE DEHYDROGENASE"/>
    <property type="match status" value="1"/>
</dbReference>
<dbReference type="PANTHER" id="PTHR11540:SF16">
    <property type="entry name" value="MALATE DEHYDROGENASE, MITOCHONDRIAL"/>
    <property type="match status" value="1"/>
</dbReference>
<dbReference type="Pfam" id="PF02866">
    <property type="entry name" value="Ldh_1_C"/>
    <property type="match status" value="1"/>
</dbReference>
<dbReference type="Pfam" id="PF00056">
    <property type="entry name" value="Ldh_1_N"/>
    <property type="match status" value="1"/>
</dbReference>
<dbReference type="PIRSF" id="PIRSF000102">
    <property type="entry name" value="Lac_mal_DH"/>
    <property type="match status" value="1"/>
</dbReference>
<dbReference type="PRINTS" id="PR00086">
    <property type="entry name" value="LLDHDRGNASE"/>
</dbReference>
<dbReference type="SUPFAM" id="SSF56327">
    <property type="entry name" value="LDH C-terminal domain-like"/>
    <property type="match status" value="1"/>
</dbReference>
<dbReference type="SUPFAM" id="SSF51735">
    <property type="entry name" value="NAD(P)-binding Rossmann-fold domains"/>
    <property type="match status" value="1"/>
</dbReference>
<protein>
    <recommendedName>
        <fullName evidence="1">Malate dehydrogenase</fullName>
        <ecNumber evidence="1">1.1.1.37</ecNumber>
    </recommendedName>
</protein>
<feature type="chain" id="PRO_1000126148" description="Malate dehydrogenase">
    <location>
        <begin position="1"/>
        <end position="319"/>
    </location>
</feature>
<feature type="active site" description="Proton acceptor" evidence="1">
    <location>
        <position position="178"/>
    </location>
</feature>
<feature type="binding site" evidence="1">
    <location>
        <begin position="10"/>
        <end position="15"/>
    </location>
    <ligand>
        <name>NAD(+)</name>
        <dbReference type="ChEBI" id="CHEBI:57540"/>
    </ligand>
</feature>
<feature type="binding site" evidence="1">
    <location>
        <position position="34"/>
    </location>
    <ligand>
        <name>NAD(+)</name>
        <dbReference type="ChEBI" id="CHEBI:57540"/>
    </ligand>
</feature>
<feature type="binding site" evidence="1">
    <location>
        <position position="85"/>
    </location>
    <ligand>
        <name>substrate</name>
    </ligand>
</feature>
<feature type="binding site" evidence="1">
    <location>
        <position position="91"/>
    </location>
    <ligand>
        <name>substrate</name>
    </ligand>
</feature>
<feature type="binding site" evidence="1">
    <location>
        <position position="98"/>
    </location>
    <ligand>
        <name>NAD(+)</name>
        <dbReference type="ChEBI" id="CHEBI:57540"/>
    </ligand>
</feature>
<feature type="binding site" evidence="1">
    <location>
        <begin position="121"/>
        <end position="123"/>
    </location>
    <ligand>
        <name>NAD(+)</name>
        <dbReference type="ChEBI" id="CHEBI:57540"/>
    </ligand>
</feature>
<feature type="binding site" evidence="1">
    <location>
        <position position="123"/>
    </location>
    <ligand>
        <name>substrate</name>
    </ligand>
</feature>
<feature type="binding site" evidence="1">
    <location>
        <position position="154"/>
    </location>
    <ligand>
        <name>substrate</name>
    </ligand>
</feature>
<sequence>MARKKIALVGAGQIGGTLALLAGQKELGDIVLLDIPDAEGVAKGKALDIAEASPVEGFDAGYTGTSNYADLAGADVVIVTAGVPRKPGMSRDDLVGINARIIKAVGEGIRTHAPDAFVIVITNPLDAMVGLMQQVTGFDPAKVVGMAGVLDSARFRWFLAEEFKVSVEDVTAFVLGGHGDTMVPSVRYSTVAGIPLPDLVKMGWTTQEKLDQIVQRTRDGGAEIVGLLKTGSAFYAPAASAIAMAESYLKDKKRVMPCAARLTGQYGVDGLYIGVPVVIGAGGVEKIVEIELNAEEQAMFDKSVAAVKSLVEVTAKVAG</sequence>
<evidence type="ECO:0000255" key="1">
    <source>
        <dbReference type="HAMAP-Rule" id="MF_00487"/>
    </source>
</evidence>
<keyword id="KW-0520">NAD</keyword>
<keyword id="KW-0560">Oxidoreductase</keyword>
<keyword id="KW-1185">Reference proteome</keyword>
<keyword id="KW-0816">Tricarboxylic acid cycle</keyword>
<proteinExistence type="inferred from homology"/>